<gene>
    <name evidence="1" type="primary">rlmM</name>
    <name type="ordered locus">SSPA2650</name>
</gene>
<evidence type="ECO:0000255" key="1">
    <source>
        <dbReference type="HAMAP-Rule" id="MF_01551"/>
    </source>
</evidence>
<sequence>MNKVVLLCRPGFEKECAAEITDKAGKREIFGFARVKENAGYVIYECYQPEDGEKLISELPFSSLIFARQWFVVGELLQHLPPEDRITPVVGMLQGVVEKGGELRVEVADTNESKELMKFCRKFTVPLRAALRDAGVLTNYETPKRPVVHVFFIAPGCCYTGYSFAHNNSPFYMGIPRLKFPSDAPSRSTLKLEEALHVFIPEDEWDERLANGMYAVDLGACPGGWTYQLVKRNMWVYSVDNGPMAQSLMDTGQVTWLREDGFRYRPNRNNISWMVCDMVEKPAKVTALMAQWLVNGWCRETIFNLKLPMKKRYEEVSHNLAYLQAQLDEHGVNAQIQARQLYHDREEVTVHVRRLWAAVGGRRDER</sequence>
<proteinExistence type="inferred from homology"/>
<keyword id="KW-0963">Cytoplasm</keyword>
<keyword id="KW-0489">Methyltransferase</keyword>
<keyword id="KW-0698">rRNA processing</keyword>
<keyword id="KW-0949">S-adenosyl-L-methionine</keyword>
<keyword id="KW-0808">Transferase</keyword>
<organism>
    <name type="scientific">Salmonella paratyphi A (strain AKU_12601)</name>
    <dbReference type="NCBI Taxonomy" id="554290"/>
    <lineage>
        <taxon>Bacteria</taxon>
        <taxon>Pseudomonadati</taxon>
        <taxon>Pseudomonadota</taxon>
        <taxon>Gammaproteobacteria</taxon>
        <taxon>Enterobacterales</taxon>
        <taxon>Enterobacteriaceae</taxon>
        <taxon>Salmonella</taxon>
    </lineage>
</organism>
<protein>
    <recommendedName>
        <fullName evidence="1">Ribosomal RNA large subunit methyltransferase M</fullName>
        <ecNumber evidence="1">2.1.1.186</ecNumber>
    </recommendedName>
    <alternativeName>
        <fullName evidence="1">23S rRNA (cytidine2498-2'-O)-methyltransferase</fullName>
    </alternativeName>
    <alternativeName>
        <fullName evidence="1">23S rRNA 2'-O-ribose methyltransferase RlmM</fullName>
    </alternativeName>
</protein>
<reference key="1">
    <citation type="journal article" date="2009" name="BMC Genomics">
        <title>Pseudogene accumulation in the evolutionary histories of Salmonella enterica serovars Paratyphi A and Typhi.</title>
        <authorList>
            <person name="Holt K.E."/>
            <person name="Thomson N.R."/>
            <person name="Wain J."/>
            <person name="Langridge G.C."/>
            <person name="Hasan R."/>
            <person name="Bhutta Z.A."/>
            <person name="Quail M.A."/>
            <person name="Norbertczak H."/>
            <person name="Walker D."/>
            <person name="Simmonds M."/>
            <person name="White B."/>
            <person name="Bason N."/>
            <person name="Mungall K."/>
            <person name="Dougan G."/>
            <person name="Parkhill J."/>
        </authorList>
    </citation>
    <scope>NUCLEOTIDE SEQUENCE [LARGE SCALE GENOMIC DNA]</scope>
    <source>
        <strain>AKU_12601</strain>
    </source>
</reference>
<feature type="chain" id="PRO_1000201531" description="Ribosomal RNA large subunit methyltransferase M">
    <location>
        <begin position="1"/>
        <end position="366"/>
    </location>
</feature>
<feature type="active site" description="Proton acceptor" evidence="1">
    <location>
        <position position="306"/>
    </location>
</feature>
<feature type="binding site" evidence="1">
    <location>
        <position position="188"/>
    </location>
    <ligand>
        <name>S-adenosyl-L-methionine</name>
        <dbReference type="ChEBI" id="CHEBI:59789"/>
    </ligand>
</feature>
<feature type="binding site" evidence="1">
    <location>
        <begin position="221"/>
        <end position="224"/>
    </location>
    <ligand>
        <name>S-adenosyl-L-methionine</name>
        <dbReference type="ChEBI" id="CHEBI:59789"/>
    </ligand>
</feature>
<feature type="binding site" evidence="1">
    <location>
        <position position="240"/>
    </location>
    <ligand>
        <name>S-adenosyl-L-methionine</name>
        <dbReference type="ChEBI" id="CHEBI:59789"/>
    </ligand>
</feature>
<feature type="binding site" evidence="1">
    <location>
        <position position="260"/>
    </location>
    <ligand>
        <name>S-adenosyl-L-methionine</name>
        <dbReference type="ChEBI" id="CHEBI:59789"/>
    </ligand>
</feature>
<feature type="binding site" evidence="1">
    <location>
        <position position="277"/>
    </location>
    <ligand>
        <name>S-adenosyl-L-methionine</name>
        <dbReference type="ChEBI" id="CHEBI:59789"/>
    </ligand>
</feature>
<accession>B5BF35</accession>
<comment type="function">
    <text evidence="1">Catalyzes the 2'-O-methylation at nucleotide C2498 in 23S rRNA.</text>
</comment>
<comment type="catalytic activity">
    <reaction evidence="1">
        <text>cytidine(2498) in 23S rRNA + S-adenosyl-L-methionine = 2'-O-methylcytidine(2498) in 23S rRNA + S-adenosyl-L-homocysteine + H(+)</text>
        <dbReference type="Rhea" id="RHEA:42788"/>
        <dbReference type="Rhea" id="RHEA-COMP:10244"/>
        <dbReference type="Rhea" id="RHEA-COMP:10245"/>
        <dbReference type="ChEBI" id="CHEBI:15378"/>
        <dbReference type="ChEBI" id="CHEBI:57856"/>
        <dbReference type="ChEBI" id="CHEBI:59789"/>
        <dbReference type="ChEBI" id="CHEBI:74495"/>
        <dbReference type="ChEBI" id="CHEBI:82748"/>
        <dbReference type="EC" id="2.1.1.186"/>
    </reaction>
</comment>
<comment type="subunit">
    <text evidence="1">Monomer.</text>
</comment>
<comment type="subcellular location">
    <subcellularLocation>
        <location evidence="1">Cytoplasm</location>
    </subcellularLocation>
</comment>
<comment type="similarity">
    <text evidence="1">Belongs to the class I-like SAM-binding methyltransferase superfamily. RNA methyltransferase RlmE family. RlmM subfamily.</text>
</comment>
<name>RLMM_SALPK</name>
<dbReference type="EC" id="2.1.1.186" evidence="1"/>
<dbReference type="EMBL" id="FM200053">
    <property type="protein sequence ID" value="CAR60892.1"/>
    <property type="molecule type" value="Genomic_DNA"/>
</dbReference>
<dbReference type="RefSeq" id="WP_001045499.1">
    <property type="nucleotide sequence ID" value="NC_011147.1"/>
</dbReference>
<dbReference type="SMR" id="B5BF35"/>
<dbReference type="KEGG" id="sek:SSPA2650"/>
<dbReference type="HOGENOM" id="CLU_043780_0_0_6"/>
<dbReference type="Proteomes" id="UP000001869">
    <property type="component" value="Chromosome"/>
</dbReference>
<dbReference type="GO" id="GO:0005737">
    <property type="term" value="C:cytoplasm"/>
    <property type="evidence" value="ECO:0007669"/>
    <property type="project" value="UniProtKB-SubCell"/>
</dbReference>
<dbReference type="GO" id="GO:0008757">
    <property type="term" value="F:S-adenosylmethionine-dependent methyltransferase activity"/>
    <property type="evidence" value="ECO:0007669"/>
    <property type="project" value="UniProtKB-UniRule"/>
</dbReference>
<dbReference type="GO" id="GO:0032259">
    <property type="term" value="P:methylation"/>
    <property type="evidence" value="ECO:0007669"/>
    <property type="project" value="UniProtKB-KW"/>
</dbReference>
<dbReference type="GO" id="GO:0006364">
    <property type="term" value="P:rRNA processing"/>
    <property type="evidence" value="ECO:0007669"/>
    <property type="project" value="UniProtKB-UniRule"/>
</dbReference>
<dbReference type="FunFam" id="3.30.2300.20:FF:000001">
    <property type="entry name" value="Ribosomal RNA large subunit methyltransferase M"/>
    <property type="match status" value="1"/>
</dbReference>
<dbReference type="FunFam" id="3.30.70.2810:FF:000001">
    <property type="entry name" value="Ribosomal RNA large subunit methyltransferase M"/>
    <property type="match status" value="1"/>
</dbReference>
<dbReference type="FunFam" id="3.40.50.150:FF:000020">
    <property type="entry name" value="Ribosomal RNA large subunit methyltransferase M"/>
    <property type="match status" value="1"/>
</dbReference>
<dbReference type="Gene3D" id="3.30.2300.20">
    <property type="match status" value="1"/>
</dbReference>
<dbReference type="Gene3D" id="3.30.70.2810">
    <property type="match status" value="1"/>
</dbReference>
<dbReference type="Gene3D" id="3.40.50.150">
    <property type="entry name" value="Vaccinia Virus protein VP39"/>
    <property type="match status" value="1"/>
</dbReference>
<dbReference type="HAMAP" id="MF_01551">
    <property type="entry name" value="23SrRNA_methyltr_M"/>
    <property type="match status" value="1"/>
</dbReference>
<dbReference type="InterPro" id="IPR040739">
    <property type="entry name" value="RlmM_FDX"/>
</dbReference>
<dbReference type="InterPro" id="IPR048646">
    <property type="entry name" value="RlmM_THUMP-like"/>
</dbReference>
<dbReference type="InterPro" id="IPR002877">
    <property type="entry name" value="RNA_MeTrfase_FtsJ_dom"/>
</dbReference>
<dbReference type="InterPro" id="IPR011224">
    <property type="entry name" value="rRNA_MeTrfase_M"/>
</dbReference>
<dbReference type="InterPro" id="IPR029063">
    <property type="entry name" value="SAM-dependent_MTases_sf"/>
</dbReference>
<dbReference type="NCBIfam" id="NF008734">
    <property type="entry name" value="PRK11760.1"/>
    <property type="match status" value="1"/>
</dbReference>
<dbReference type="PANTHER" id="PTHR37524">
    <property type="entry name" value="RIBOSOMAL RNA LARGE SUBUNIT METHYLTRANSFERASE M"/>
    <property type="match status" value="1"/>
</dbReference>
<dbReference type="PANTHER" id="PTHR37524:SF2">
    <property type="entry name" value="RIBOSOMAL RNA METHYLTRANSFERASE FTSJ DOMAIN-CONTAINING PROTEIN"/>
    <property type="match status" value="1"/>
</dbReference>
<dbReference type="Pfam" id="PF01728">
    <property type="entry name" value="FtsJ"/>
    <property type="match status" value="1"/>
</dbReference>
<dbReference type="Pfam" id="PF18125">
    <property type="entry name" value="RlmM_FDX"/>
    <property type="match status" value="1"/>
</dbReference>
<dbReference type="Pfam" id="PF21239">
    <property type="entry name" value="RLMM_N"/>
    <property type="match status" value="1"/>
</dbReference>
<dbReference type="PIRSF" id="PIRSF028774">
    <property type="entry name" value="UCP028774"/>
    <property type="match status" value="1"/>
</dbReference>
<dbReference type="SUPFAM" id="SSF53335">
    <property type="entry name" value="S-adenosyl-L-methionine-dependent methyltransferases"/>
    <property type="match status" value="1"/>
</dbReference>